<name>PSB2_CENSY</name>
<feature type="propeptide" id="PRO_0000397286" description="Removed in mature form; by autocatalysis" evidence="1">
    <location>
        <begin position="1"/>
        <end position="12"/>
    </location>
</feature>
<feature type="chain" id="PRO_0000397287" description="Proteasome subunit beta 2">
    <location>
        <begin position="13"/>
        <end position="210"/>
    </location>
</feature>
<feature type="active site" description="Nucleophile" evidence="1">
    <location>
        <position position="13"/>
    </location>
</feature>
<sequence>MSNNVEEKILHGTTTVGIKATDGVVLCADMRASAGYFIANNNTMKIQRIDDHAGLTLAGGVADAQNIVDVLRYHASLHRIRKQGPIPIKSLARLTSLIFHQNRGYPFMADILMGGFDAVGPALYNIDMFGSVEEKSYVTTGSGSPVAYGTLEEEYRADLTADEAKGVALRAVKAAITRNIGTGDGINVAVINGNGFELLTREQKKAVIAL</sequence>
<protein>
    <recommendedName>
        <fullName evidence="1">Proteasome subunit beta 2</fullName>
        <ecNumber evidence="1">3.4.25.1</ecNumber>
    </recommendedName>
    <alternativeName>
        <fullName evidence="1">20S proteasome beta subunit 2</fullName>
    </alternativeName>
    <alternativeName>
        <fullName evidence="1">Proteasome core protein PsmB 2</fullName>
    </alternativeName>
</protein>
<reference key="1">
    <citation type="journal article" date="2006" name="Proc. Natl. Acad. Sci. U.S.A.">
        <title>Genomic analysis of the uncultivated marine crenarchaeote Cenarchaeum symbiosum.</title>
        <authorList>
            <person name="Hallam S.J."/>
            <person name="Konstantinidis K.T."/>
            <person name="Putnam N."/>
            <person name="Schleper C."/>
            <person name="Watanabe Y."/>
            <person name="Sugahara J."/>
            <person name="Preston C."/>
            <person name="de la Torre J."/>
            <person name="Richardson P.M."/>
            <person name="DeLong E.F."/>
        </authorList>
    </citation>
    <scope>NUCLEOTIDE SEQUENCE [LARGE SCALE GENOMIC DNA]</scope>
    <source>
        <strain>A</strain>
    </source>
</reference>
<accession>A0RXV1</accession>
<proteinExistence type="inferred from homology"/>
<evidence type="ECO:0000255" key="1">
    <source>
        <dbReference type="HAMAP-Rule" id="MF_02113"/>
    </source>
</evidence>
<evidence type="ECO:0000305" key="2"/>
<comment type="function">
    <text evidence="1">Component of the proteasome core, a large protease complex with broad specificity involved in protein degradation.</text>
</comment>
<comment type="catalytic activity">
    <reaction evidence="1">
        <text>Cleavage of peptide bonds with very broad specificity.</text>
        <dbReference type="EC" id="3.4.25.1"/>
    </reaction>
</comment>
<comment type="activity regulation">
    <text evidence="1">The formation of the proteasomal ATPase PAN-20S proteasome complex, via the docking of the C-termini of PAN into the intersubunit pockets in the alpha-rings, triggers opening of the gate for substrate entry. Interconversion between the open-gate and close-gate conformations leads to a dynamic regulation of the 20S proteasome proteolysis activity.</text>
</comment>
<comment type="subunit">
    <text evidence="1">The 20S proteasome core is composed of 14 alpha and 14 beta subunits that assemble into four stacked heptameric rings, resulting in a barrel-shaped structure. The two inner rings, each composed of seven catalytic beta subunits, are sandwiched by two outer rings, each composed of seven alpha subunits. The catalytic chamber with the active sites is on the inside of the barrel. Has a gated structure, the ends of the cylinder being occluded by the N-termini of the alpha-subunits. Is capped at one or both ends by the proteasome regulatory ATPase, PAN.</text>
</comment>
<comment type="subcellular location">
    <subcellularLocation>
        <location evidence="1">Cytoplasm</location>
    </subcellularLocation>
</comment>
<comment type="similarity">
    <text evidence="1">Belongs to the peptidase T1B family.</text>
</comment>
<comment type="sequence caution" evidence="2">
    <conflict type="erroneous initiation">
        <sequence resource="EMBL-CDS" id="ABK78168"/>
    </conflict>
    <text>Truncated N-terminus.</text>
</comment>
<organism>
    <name type="scientific">Cenarchaeum symbiosum (strain A)</name>
    <dbReference type="NCBI Taxonomy" id="414004"/>
    <lineage>
        <taxon>Archaea</taxon>
        <taxon>Nitrososphaerota</taxon>
        <taxon>Candidatus Cenarchaeales</taxon>
        <taxon>Candidatus Cenarchaeaceae</taxon>
        <taxon>Candidatus Cenarchaeum</taxon>
    </lineage>
</organism>
<gene>
    <name evidence="1" type="primary">psmB2</name>
    <name type="ordered locus">CENSYa_1546</name>
</gene>
<keyword id="KW-0068">Autocatalytic cleavage</keyword>
<keyword id="KW-0963">Cytoplasm</keyword>
<keyword id="KW-0378">Hydrolase</keyword>
<keyword id="KW-0645">Protease</keyword>
<keyword id="KW-0647">Proteasome</keyword>
<keyword id="KW-1185">Reference proteome</keyword>
<keyword id="KW-0888">Threonine protease</keyword>
<keyword id="KW-0865">Zymogen</keyword>
<dbReference type="EC" id="3.4.25.1" evidence="1"/>
<dbReference type="EMBL" id="DP000238">
    <property type="protein sequence ID" value="ABK78168.1"/>
    <property type="status" value="ALT_INIT"/>
    <property type="molecule type" value="Genomic_DNA"/>
</dbReference>
<dbReference type="SMR" id="A0RXV1"/>
<dbReference type="STRING" id="414004.CENSYa_1546"/>
<dbReference type="EnsemblBacteria" id="ABK78168">
    <property type="protein sequence ID" value="ABK78168"/>
    <property type="gene ID" value="CENSYa_1546"/>
</dbReference>
<dbReference type="KEGG" id="csy:CENSYa_1546"/>
<dbReference type="PATRIC" id="fig|414004.10.peg.1415"/>
<dbReference type="HOGENOM" id="CLU_035750_7_2_2"/>
<dbReference type="Proteomes" id="UP000000758">
    <property type="component" value="Chromosome"/>
</dbReference>
<dbReference type="GO" id="GO:0005737">
    <property type="term" value="C:cytoplasm"/>
    <property type="evidence" value="ECO:0007669"/>
    <property type="project" value="UniProtKB-SubCell"/>
</dbReference>
<dbReference type="GO" id="GO:0019774">
    <property type="term" value="C:proteasome core complex, beta-subunit complex"/>
    <property type="evidence" value="ECO:0007669"/>
    <property type="project" value="UniProtKB-UniRule"/>
</dbReference>
<dbReference type="GO" id="GO:0004298">
    <property type="term" value="F:threonine-type endopeptidase activity"/>
    <property type="evidence" value="ECO:0007669"/>
    <property type="project" value="UniProtKB-UniRule"/>
</dbReference>
<dbReference type="GO" id="GO:0010498">
    <property type="term" value="P:proteasomal protein catabolic process"/>
    <property type="evidence" value="ECO:0007669"/>
    <property type="project" value="UniProtKB-UniRule"/>
</dbReference>
<dbReference type="FunFam" id="3.60.20.10:FF:000049">
    <property type="entry name" value="Proteasome subunit beta"/>
    <property type="match status" value="1"/>
</dbReference>
<dbReference type="Gene3D" id="3.60.20.10">
    <property type="entry name" value="Glutamine Phosphoribosylpyrophosphate, subunit 1, domain 1"/>
    <property type="match status" value="1"/>
</dbReference>
<dbReference type="HAMAP" id="MF_02113_A">
    <property type="entry name" value="Proteasome_B_A"/>
    <property type="match status" value="1"/>
</dbReference>
<dbReference type="InterPro" id="IPR029055">
    <property type="entry name" value="Ntn_hydrolases_N"/>
</dbReference>
<dbReference type="InterPro" id="IPR019983">
    <property type="entry name" value="Pept_T1A_Psome_bsu_arc"/>
</dbReference>
<dbReference type="InterPro" id="IPR000243">
    <property type="entry name" value="Pept_T1A_subB"/>
</dbReference>
<dbReference type="InterPro" id="IPR016050">
    <property type="entry name" value="Proteasome_bsu_CS"/>
</dbReference>
<dbReference type="InterPro" id="IPR001353">
    <property type="entry name" value="Proteasome_sua/b"/>
</dbReference>
<dbReference type="InterPro" id="IPR023333">
    <property type="entry name" value="Proteasome_suB-type"/>
</dbReference>
<dbReference type="NCBIfam" id="TIGR03634">
    <property type="entry name" value="arc_protsome_B"/>
    <property type="match status" value="1"/>
</dbReference>
<dbReference type="PANTHER" id="PTHR32194:SF0">
    <property type="entry name" value="ATP-DEPENDENT PROTEASE SUBUNIT HSLV"/>
    <property type="match status" value="1"/>
</dbReference>
<dbReference type="PANTHER" id="PTHR32194">
    <property type="entry name" value="METALLOPROTEASE TLDD"/>
    <property type="match status" value="1"/>
</dbReference>
<dbReference type="Pfam" id="PF00227">
    <property type="entry name" value="Proteasome"/>
    <property type="match status" value="1"/>
</dbReference>
<dbReference type="PRINTS" id="PR00141">
    <property type="entry name" value="PROTEASOME"/>
</dbReference>
<dbReference type="SUPFAM" id="SSF56235">
    <property type="entry name" value="N-terminal nucleophile aminohydrolases (Ntn hydrolases)"/>
    <property type="match status" value="1"/>
</dbReference>
<dbReference type="PROSITE" id="PS00854">
    <property type="entry name" value="PROTEASOME_BETA_1"/>
    <property type="match status" value="1"/>
</dbReference>
<dbReference type="PROSITE" id="PS51476">
    <property type="entry name" value="PROTEASOME_BETA_2"/>
    <property type="match status" value="1"/>
</dbReference>